<comment type="function">
    <text evidence="1">Participates actively in the response to hyperosmotic and heat shock by preventing the aggregation of stress-denatured proteins and by disaggregating proteins, also in an autonomous, DnaK-independent fashion. Unfolded proteins bind initially to DnaJ; upon interaction with the DnaJ-bound protein, DnaK hydrolyzes its bound ATP, resulting in the formation of a stable complex. GrpE releases ADP from DnaK; ATP binding to DnaK triggers the release of the substrate protein, thus completing the reaction cycle. Several rounds of ATP-dependent interactions between DnaJ, DnaK and GrpE are required for fully efficient folding. Also involved, together with DnaK and GrpE, in the DNA replication of plasmids through activation of initiation proteins.</text>
</comment>
<comment type="cofactor">
    <cofactor evidence="1">
        <name>Zn(2+)</name>
        <dbReference type="ChEBI" id="CHEBI:29105"/>
    </cofactor>
    <text evidence="1">Binds 2 Zn(2+) ions per monomer.</text>
</comment>
<comment type="subunit">
    <text evidence="1">Homodimer.</text>
</comment>
<comment type="subcellular location">
    <subcellularLocation>
        <location evidence="1">Cytoplasm</location>
    </subcellularLocation>
</comment>
<comment type="domain">
    <text evidence="1">The J domain is necessary and sufficient to stimulate DnaK ATPase activity. Zinc center 1 plays an important role in the autonomous, DnaK-independent chaperone activity of DnaJ. Zinc center 2 is essential for interaction with DnaK and for DnaJ activity.</text>
</comment>
<comment type="similarity">
    <text evidence="1">Belongs to the DnaJ family.</text>
</comment>
<protein>
    <recommendedName>
        <fullName evidence="1">Chaperone protein DnaJ</fullName>
    </recommendedName>
</protein>
<gene>
    <name evidence="1" type="primary">dnaJ</name>
    <name type="ordered locus">BruAb1_2101</name>
</gene>
<reference key="1">
    <citation type="journal article" date="2005" name="J. Bacteriol.">
        <title>Completion of the genome sequence of Brucella abortus and comparison to the highly similar genomes of Brucella melitensis and Brucella suis.</title>
        <authorList>
            <person name="Halling S.M."/>
            <person name="Peterson-Burch B.D."/>
            <person name="Bricker B.J."/>
            <person name="Zuerner R.L."/>
            <person name="Qing Z."/>
            <person name="Li L.-L."/>
            <person name="Kapur V."/>
            <person name="Alt D.P."/>
            <person name="Olsen S.C."/>
        </authorList>
    </citation>
    <scope>NUCLEOTIDE SEQUENCE [LARGE SCALE GENOMIC DNA]</scope>
    <source>
        <strain>9-941</strain>
    </source>
</reference>
<name>DNAJ_BRUAB</name>
<proteinExistence type="inferred from homology"/>
<keyword id="KW-0143">Chaperone</keyword>
<keyword id="KW-0963">Cytoplasm</keyword>
<keyword id="KW-0235">DNA replication</keyword>
<keyword id="KW-0479">Metal-binding</keyword>
<keyword id="KW-0677">Repeat</keyword>
<keyword id="KW-0346">Stress response</keyword>
<keyword id="KW-0862">Zinc</keyword>
<keyword id="KW-0863">Zinc-finger</keyword>
<accession>Q57AD6</accession>
<dbReference type="EMBL" id="AE017223">
    <property type="protein sequence ID" value="AAX75398.1"/>
    <property type="molecule type" value="Genomic_DNA"/>
</dbReference>
<dbReference type="RefSeq" id="WP_002965191.1">
    <property type="nucleotide sequence ID" value="NC_006932.1"/>
</dbReference>
<dbReference type="SMR" id="Q57AD6"/>
<dbReference type="EnsemblBacteria" id="AAX75398">
    <property type="protein sequence ID" value="AAX75398"/>
    <property type="gene ID" value="BruAb1_2101"/>
</dbReference>
<dbReference type="GeneID" id="93017567"/>
<dbReference type="KEGG" id="bmb:BruAb1_2101"/>
<dbReference type="HOGENOM" id="CLU_017633_0_7_5"/>
<dbReference type="PRO" id="PR:Q57AD6"/>
<dbReference type="Proteomes" id="UP000000540">
    <property type="component" value="Chromosome I"/>
</dbReference>
<dbReference type="GO" id="GO:0005737">
    <property type="term" value="C:cytoplasm"/>
    <property type="evidence" value="ECO:0007669"/>
    <property type="project" value="UniProtKB-SubCell"/>
</dbReference>
<dbReference type="GO" id="GO:0005524">
    <property type="term" value="F:ATP binding"/>
    <property type="evidence" value="ECO:0007669"/>
    <property type="project" value="InterPro"/>
</dbReference>
<dbReference type="GO" id="GO:0031072">
    <property type="term" value="F:heat shock protein binding"/>
    <property type="evidence" value="ECO:0007669"/>
    <property type="project" value="InterPro"/>
</dbReference>
<dbReference type="GO" id="GO:0051082">
    <property type="term" value="F:unfolded protein binding"/>
    <property type="evidence" value="ECO:0007669"/>
    <property type="project" value="UniProtKB-UniRule"/>
</dbReference>
<dbReference type="GO" id="GO:0008270">
    <property type="term" value="F:zinc ion binding"/>
    <property type="evidence" value="ECO:0007669"/>
    <property type="project" value="UniProtKB-UniRule"/>
</dbReference>
<dbReference type="GO" id="GO:0051085">
    <property type="term" value="P:chaperone cofactor-dependent protein refolding"/>
    <property type="evidence" value="ECO:0007669"/>
    <property type="project" value="TreeGrafter"/>
</dbReference>
<dbReference type="GO" id="GO:0006260">
    <property type="term" value="P:DNA replication"/>
    <property type="evidence" value="ECO:0007669"/>
    <property type="project" value="UniProtKB-KW"/>
</dbReference>
<dbReference type="GO" id="GO:0042026">
    <property type="term" value="P:protein refolding"/>
    <property type="evidence" value="ECO:0007669"/>
    <property type="project" value="TreeGrafter"/>
</dbReference>
<dbReference type="GO" id="GO:0009408">
    <property type="term" value="P:response to heat"/>
    <property type="evidence" value="ECO:0007669"/>
    <property type="project" value="InterPro"/>
</dbReference>
<dbReference type="CDD" id="cd06257">
    <property type="entry name" value="DnaJ"/>
    <property type="match status" value="1"/>
</dbReference>
<dbReference type="CDD" id="cd10747">
    <property type="entry name" value="DnaJ_C"/>
    <property type="match status" value="1"/>
</dbReference>
<dbReference type="CDD" id="cd10719">
    <property type="entry name" value="DnaJ_zf"/>
    <property type="match status" value="1"/>
</dbReference>
<dbReference type="FunFam" id="1.10.287.110:FF:000034">
    <property type="entry name" value="Chaperone protein DnaJ"/>
    <property type="match status" value="1"/>
</dbReference>
<dbReference type="FunFam" id="2.10.230.10:FF:000002">
    <property type="entry name" value="Molecular chaperone DnaJ"/>
    <property type="match status" value="1"/>
</dbReference>
<dbReference type="FunFam" id="2.60.260.20:FF:000004">
    <property type="entry name" value="Molecular chaperone DnaJ"/>
    <property type="match status" value="1"/>
</dbReference>
<dbReference type="Gene3D" id="1.10.287.110">
    <property type="entry name" value="DnaJ domain"/>
    <property type="match status" value="1"/>
</dbReference>
<dbReference type="Gene3D" id="2.10.230.10">
    <property type="entry name" value="Heat shock protein DnaJ, cysteine-rich domain"/>
    <property type="match status" value="1"/>
</dbReference>
<dbReference type="Gene3D" id="2.60.260.20">
    <property type="entry name" value="Urease metallochaperone UreE, N-terminal domain"/>
    <property type="match status" value="2"/>
</dbReference>
<dbReference type="HAMAP" id="MF_01152">
    <property type="entry name" value="DnaJ"/>
    <property type="match status" value="1"/>
</dbReference>
<dbReference type="InterPro" id="IPR012724">
    <property type="entry name" value="DnaJ"/>
</dbReference>
<dbReference type="InterPro" id="IPR002939">
    <property type="entry name" value="DnaJ_C"/>
</dbReference>
<dbReference type="InterPro" id="IPR001623">
    <property type="entry name" value="DnaJ_domain"/>
</dbReference>
<dbReference type="InterPro" id="IPR018253">
    <property type="entry name" value="DnaJ_domain_CS"/>
</dbReference>
<dbReference type="InterPro" id="IPR008971">
    <property type="entry name" value="HSP40/DnaJ_pept-bd"/>
</dbReference>
<dbReference type="InterPro" id="IPR001305">
    <property type="entry name" value="HSP_DnaJ_Cys-rich_dom"/>
</dbReference>
<dbReference type="InterPro" id="IPR036410">
    <property type="entry name" value="HSP_DnaJ_Cys-rich_dom_sf"/>
</dbReference>
<dbReference type="InterPro" id="IPR036869">
    <property type="entry name" value="J_dom_sf"/>
</dbReference>
<dbReference type="NCBIfam" id="TIGR02349">
    <property type="entry name" value="DnaJ_bact"/>
    <property type="match status" value="1"/>
</dbReference>
<dbReference type="NCBIfam" id="NF008035">
    <property type="entry name" value="PRK10767.1"/>
    <property type="match status" value="1"/>
</dbReference>
<dbReference type="PANTHER" id="PTHR43096:SF48">
    <property type="entry name" value="CHAPERONE PROTEIN DNAJ"/>
    <property type="match status" value="1"/>
</dbReference>
<dbReference type="PANTHER" id="PTHR43096">
    <property type="entry name" value="DNAJ HOMOLOG 1, MITOCHONDRIAL-RELATED"/>
    <property type="match status" value="1"/>
</dbReference>
<dbReference type="Pfam" id="PF00226">
    <property type="entry name" value="DnaJ"/>
    <property type="match status" value="1"/>
</dbReference>
<dbReference type="Pfam" id="PF01556">
    <property type="entry name" value="DnaJ_C"/>
    <property type="match status" value="1"/>
</dbReference>
<dbReference type="Pfam" id="PF00684">
    <property type="entry name" value="DnaJ_CXXCXGXG"/>
    <property type="match status" value="1"/>
</dbReference>
<dbReference type="PRINTS" id="PR00625">
    <property type="entry name" value="JDOMAIN"/>
</dbReference>
<dbReference type="SMART" id="SM00271">
    <property type="entry name" value="DnaJ"/>
    <property type="match status" value="1"/>
</dbReference>
<dbReference type="SUPFAM" id="SSF46565">
    <property type="entry name" value="Chaperone J-domain"/>
    <property type="match status" value="1"/>
</dbReference>
<dbReference type="SUPFAM" id="SSF57938">
    <property type="entry name" value="DnaJ/Hsp40 cysteine-rich domain"/>
    <property type="match status" value="1"/>
</dbReference>
<dbReference type="SUPFAM" id="SSF49493">
    <property type="entry name" value="HSP40/DnaJ peptide-binding domain"/>
    <property type="match status" value="2"/>
</dbReference>
<dbReference type="PROSITE" id="PS00636">
    <property type="entry name" value="DNAJ_1"/>
    <property type="match status" value="1"/>
</dbReference>
<dbReference type="PROSITE" id="PS50076">
    <property type="entry name" value="DNAJ_2"/>
    <property type="match status" value="1"/>
</dbReference>
<dbReference type="PROSITE" id="PS51188">
    <property type="entry name" value="ZF_CR"/>
    <property type="match status" value="1"/>
</dbReference>
<organism>
    <name type="scientific">Brucella abortus biovar 1 (strain 9-941)</name>
    <dbReference type="NCBI Taxonomy" id="262698"/>
    <lineage>
        <taxon>Bacteria</taxon>
        <taxon>Pseudomonadati</taxon>
        <taxon>Pseudomonadota</taxon>
        <taxon>Alphaproteobacteria</taxon>
        <taxon>Hyphomicrobiales</taxon>
        <taxon>Brucellaceae</taxon>
        <taxon>Brucella/Ochrobactrum group</taxon>
        <taxon>Brucella</taxon>
    </lineage>
</organism>
<sequence length="377" mass="41108">MKIDYYEALGVTRTADDKTLKAAFRKLAMQYHPDRNPDDPEAERKFKEIGEAYETLKDPQKRAAYDRFGHAAFENGGMGGGFGNGFGGAGGFADIFEDIFGEMMGGGRRRSNGGRERGADLRYNMEVTLEEAYAGKTAQIRVPTSITCDECSGSGAKPGSQPTTCTMCSGSGRVRAAQGFFSVERTCPGCNGRGQIIKDPCEKCHGQGRVTQERSLSVNIPTGIEDGTRIRLAGEGEAGLRGGPAGDLYIFLSVKPHEFFQRDGADLYCKVPISMTTAALGGQFEVSTLDGTQTRVKVPEGTQNGKQFRLKGKGMPVLRQSVTGDLYIQIDIETPQNLSKRQRELLEEFEKLSSQENSPKSAGFFSRMKEFFEGIGE</sequence>
<evidence type="ECO:0000255" key="1">
    <source>
        <dbReference type="HAMAP-Rule" id="MF_01152"/>
    </source>
</evidence>
<feature type="chain" id="PRO_0000070741" description="Chaperone protein DnaJ">
    <location>
        <begin position="1"/>
        <end position="377"/>
    </location>
</feature>
<feature type="domain" description="J" evidence="1">
    <location>
        <begin position="4"/>
        <end position="69"/>
    </location>
</feature>
<feature type="repeat" description="CXXCXGXG motif">
    <location>
        <begin position="148"/>
        <end position="155"/>
    </location>
</feature>
<feature type="repeat" description="CXXCXGXG motif">
    <location>
        <begin position="165"/>
        <end position="172"/>
    </location>
</feature>
<feature type="repeat" description="CXXCXGXG motif">
    <location>
        <begin position="187"/>
        <end position="194"/>
    </location>
</feature>
<feature type="repeat" description="CXXCXGXG motif">
    <location>
        <begin position="201"/>
        <end position="208"/>
    </location>
</feature>
<feature type="zinc finger region" description="CR-type" evidence="1">
    <location>
        <begin position="135"/>
        <end position="213"/>
    </location>
</feature>
<feature type="binding site" evidence="1">
    <location>
        <position position="148"/>
    </location>
    <ligand>
        <name>Zn(2+)</name>
        <dbReference type="ChEBI" id="CHEBI:29105"/>
        <label>1</label>
    </ligand>
</feature>
<feature type="binding site" evidence="1">
    <location>
        <position position="151"/>
    </location>
    <ligand>
        <name>Zn(2+)</name>
        <dbReference type="ChEBI" id="CHEBI:29105"/>
        <label>1</label>
    </ligand>
</feature>
<feature type="binding site" evidence="1">
    <location>
        <position position="165"/>
    </location>
    <ligand>
        <name>Zn(2+)</name>
        <dbReference type="ChEBI" id="CHEBI:29105"/>
        <label>2</label>
    </ligand>
</feature>
<feature type="binding site" evidence="1">
    <location>
        <position position="168"/>
    </location>
    <ligand>
        <name>Zn(2+)</name>
        <dbReference type="ChEBI" id="CHEBI:29105"/>
        <label>2</label>
    </ligand>
</feature>
<feature type="binding site" evidence="1">
    <location>
        <position position="187"/>
    </location>
    <ligand>
        <name>Zn(2+)</name>
        <dbReference type="ChEBI" id="CHEBI:29105"/>
        <label>2</label>
    </ligand>
</feature>
<feature type="binding site" evidence="1">
    <location>
        <position position="190"/>
    </location>
    <ligand>
        <name>Zn(2+)</name>
        <dbReference type="ChEBI" id="CHEBI:29105"/>
        <label>2</label>
    </ligand>
</feature>
<feature type="binding site" evidence="1">
    <location>
        <position position="201"/>
    </location>
    <ligand>
        <name>Zn(2+)</name>
        <dbReference type="ChEBI" id="CHEBI:29105"/>
        <label>1</label>
    </ligand>
</feature>
<feature type="binding site" evidence="1">
    <location>
        <position position="204"/>
    </location>
    <ligand>
        <name>Zn(2+)</name>
        <dbReference type="ChEBI" id="CHEBI:29105"/>
        <label>1</label>
    </ligand>
</feature>